<sequence>MFITRWLFSTNHKDIGTLYLLFGAWAGMVGTALSLLIRAELGQPGTLLGDDQIYNVIVTAHAFVMIFFMVMPIMIGGFGNWLVPLMIGAPDMAFPRMNNMSFWLLPPSFLLLLASSTVEAGAGTGWTVYPPLAGNLAHAGASVDLAIFSLHLAGVSSILGAINFITTIINMKPPALTQYQTPLFVWSVMITAVLLLLSLPVLAAGITMLLTDRNLNTTFFDPAGGGDPILYQHLFWFFGHPEVYILILPGFGMISHIVTYYSGKKEPFGYMGMVWAMMSIGFLGFIVWAHHMFTVGLDVDTRAYFTSATMIIAIPTGVKVFSWLATLHGGNIKWSPALLWALGFIFLFTIGGLTGIVLANSSLDIVLHDTYYVVAHFHYVLSMGAVFAIMGGFVHWFPLFTGYTLNDLWAKIHFSIMFVGVNMTFFPQHFLGLSGMPRRYSDYPDAYTTWNIISSIGSFISLTAVILMVFIIWEAFASKREVATVELTTTNIEWLYGCPPPYHTFEQPVFVKV</sequence>
<feature type="chain" id="PRO_0000183358" description="Cytochrome c oxidase subunit 1">
    <location>
        <begin position="1"/>
        <end position="513"/>
    </location>
</feature>
<feature type="topological domain" description="Mitochondrial matrix" evidence="2">
    <location>
        <begin position="1"/>
        <end position="11"/>
    </location>
</feature>
<feature type="transmembrane region" description="Helical; Name=I" evidence="2">
    <location>
        <begin position="12"/>
        <end position="40"/>
    </location>
</feature>
<feature type="topological domain" description="Mitochondrial intermembrane" evidence="2">
    <location>
        <begin position="41"/>
        <end position="50"/>
    </location>
</feature>
<feature type="transmembrane region" description="Helical; Name=II" evidence="2">
    <location>
        <begin position="51"/>
        <end position="86"/>
    </location>
</feature>
<feature type="topological domain" description="Mitochondrial matrix" evidence="2">
    <location>
        <begin position="87"/>
        <end position="94"/>
    </location>
</feature>
<feature type="transmembrane region" description="Helical; Name=III" evidence="2">
    <location>
        <begin position="95"/>
        <end position="117"/>
    </location>
</feature>
<feature type="topological domain" description="Mitochondrial intermembrane" evidence="2">
    <location>
        <begin position="118"/>
        <end position="140"/>
    </location>
</feature>
<feature type="transmembrane region" description="Helical; Name=IV" evidence="2">
    <location>
        <begin position="141"/>
        <end position="170"/>
    </location>
</feature>
<feature type="topological domain" description="Mitochondrial matrix" evidence="2">
    <location>
        <begin position="171"/>
        <end position="182"/>
    </location>
</feature>
<feature type="transmembrane region" description="Helical; Name=V" evidence="2">
    <location>
        <begin position="183"/>
        <end position="212"/>
    </location>
</feature>
<feature type="topological domain" description="Mitochondrial intermembrane" evidence="2">
    <location>
        <begin position="213"/>
        <end position="227"/>
    </location>
</feature>
<feature type="transmembrane region" description="Helical; Name=VI" evidence="2">
    <location>
        <begin position="228"/>
        <end position="261"/>
    </location>
</feature>
<feature type="topological domain" description="Mitochondrial matrix" evidence="2">
    <location>
        <begin position="262"/>
        <end position="269"/>
    </location>
</feature>
<feature type="transmembrane region" description="Helical; Name=VII" evidence="2">
    <location>
        <begin position="270"/>
        <end position="286"/>
    </location>
</feature>
<feature type="topological domain" description="Mitochondrial intermembrane" evidence="2">
    <location>
        <begin position="287"/>
        <end position="298"/>
    </location>
</feature>
<feature type="transmembrane region" description="Helical; Name=VIII" evidence="2">
    <location>
        <begin position="299"/>
        <end position="327"/>
    </location>
</feature>
<feature type="topological domain" description="Mitochondrial matrix" evidence="2">
    <location>
        <begin position="328"/>
        <end position="335"/>
    </location>
</feature>
<feature type="transmembrane region" description="Helical; Name=IX" evidence="2">
    <location>
        <begin position="336"/>
        <end position="357"/>
    </location>
</feature>
<feature type="topological domain" description="Mitochondrial intermembrane" evidence="2">
    <location>
        <begin position="358"/>
        <end position="370"/>
    </location>
</feature>
<feature type="transmembrane region" description="Helical; Name=X" evidence="2">
    <location>
        <begin position="371"/>
        <end position="400"/>
    </location>
</feature>
<feature type="topological domain" description="Mitochondrial matrix" evidence="2">
    <location>
        <begin position="401"/>
        <end position="406"/>
    </location>
</feature>
<feature type="transmembrane region" description="Helical; Name=XI" evidence="2">
    <location>
        <begin position="407"/>
        <end position="433"/>
    </location>
</feature>
<feature type="topological domain" description="Mitochondrial intermembrane" evidence="2">
    <location>
        <begin position="434"/>
        <end position="446"/>
    </location>
</feature>
<feature type="transmembrane region" description="Helical; Name=XII" evidence="2">
    <location>
        <begin position="447"/>
        <end position="478"/>
    </location>
</feature>
<feature type="topological domain" description="Mitochondrial matrix" evidence="2">
    <location>
        <begin position="479"/>
        <end position="513"/>
    </location>
</feature>
<feature type="binding site" evidence="2">
    <location>
        <position position="40"/>
    </location>
    <ligand>
        <name>Na(+)</name>
        <dbReference type="ChEBI" id="CHEBI:29101"/>
    </ligand>
</feature>
<feature type="binding site" evidence="2">
    <location>
        <position position="45"/>
    </location>
    <ligand>
        <name>Na(+)</name>
        <dbReference type="ChEBI" id="CHEBI:29101"/>
    </ligand>
</feature>
<feature type="binding site" description="axial binding residue" evidence="2">
    <location>
        <position position="61"/>
    </location>
    <ligand>
        <name>Fe(II)-heme a</name>
        <dbReference type="ChEBI" id="CHEBI:61715"/>
        <note>low-spin</note>
    </ligand>
    <ligandPart>
        <name>Fe</name>
        <dbReference type="ChEBI" id="CHEBI:18248"/>
    </ligandPart>
</feature>
<feature type="binding site" evidence="2">
    <location>
        <position position="240"/>
    </location>
    <ligand>
        <name>Cu cation</name>
        <dbReference type="ChEBI" id="CHEBI:23378"/>
        <label>B</label>
    </ligand>
</feature>
<feature type="binding site" evidence="2">
    <location>
        <position position="244"/>
    </location>
    <ligand>
        <name>O2</name>
        <dbReference type="ChEBI" id="CHEBI:15379"/>
    </ligand>
</feature>
<feature type="binding site" evidence="2">
    <location>
        <position position="290"/>
    </location>
    <ligand>
        <name>Cu cation</name>
        <dbReference type="ChEBI" id="CHEBI:23378"/>
        <label>B</label>
    </ligand>
</feature>
<feature type="binding site" evidence="2">
    <location>
        <position position="291"/>
    </location>
    <ligand>
        <name>Cu cation</name>
        <dbReference type="ChEBI" id="CHEBI:23378"/>
        <label>B</label>
    </ligand>
</feature>
<feature type="binding site" evidence="2">
    <location>
        <position position="368"/>
    </location>
    <ligand>
        <name>Mg(2+)</name>
        <dbReference type="ChEBI" id="CHEBI:18420"/>
        <note>ligand shared with MT-CO2</note>
    </ligand>
</feature>
<feature type="binding site" evidence="2">
    <location>
        <position position="369"/>
    </location>
    <ligand>
        <name>Mg(2+)</name>
        <dbReference type="ChEBI" id="CHEBI:18420"/>
        <note>ligand shared with MT-CO2</note>
    </ligand>
</feature>
<feature type="binding site" description="axial binding residue" evidence="2">
    <location>
        <position position="376"/>
    </location>
    <ligand>
        <name>heme a3</name>
        <dbReference type="ChEBI" id="CHEBI:83282"/>
        <note>high-spin</note>
    </ligand>
    <ligandPart>
        <name>Fe</name>
        <dbReference type="ChEBI" id="CHEBI:18248"/>
    </ligandPart>
</feature>
<feature type="binding site" description="axial binding residue" evidence="2">
    <location>
        <position position="378"/>
    </location>
    <ligand>
        <name>Fe(II)-heme a</name>
        <dbReference type="ChEBI" id="CHEBI:61715"/>
        <note>low-spin</note>
    </ligand>
    <ligandPart>
        <name>Fe</name>
        <dbReference type="ChEBI" id="CHEBI:18248"/>
    </ligandPart>
</feature>
<feature type="binding site" evidence="2">
    <location>
        <position position="441"/>
    </location>
    <ligand>
        <name>Na(+)</name>
        <dbReference type="ChEBI" id="CHEBI:29101"/>
    </ligand>
</feature>
<feature type="cross-link" description="1'-histidyl-3'-tyrosine (His-Tyr)" evidence="2">
    <location>
        <begin position="240"/>
        <end position="244"/>
    </location>
</feature>
<evidence type="ECO:0000250" key="1">
    <source>
        <dbReference type="UniProtKB" id="P00395"/>
    </source>
</evidence>
<evidence type="ECO:0000250" key="2">
    <source>
        <dbReference type="UniProtKB" id="P00396"/>
    </source>
</evidence>
<evidence type="ECO:0000250" key="3">
    <source>
        <dbReference type="UniProtKB" id="P00401"/>
    </source>
</evidence>
<evidence type="ECO:0000305" key="4"/>
<gene>
    <name type="primary">MT-CO1</name>
    <name type="synonym">COI</name>
    <name type="synonym">COXI</name>
    <name type="synonym">MTCO1</name>
</gene>
<accession>P92661</accession>
<reference key="1">
    <citation type="journal article" date="1997" name="Proc. Natl. Acad. Sci. U.S.A.">
        <title>The complete mitochondrial genome of the wallaroo (Macropus robustus) and the phylogenetic relationship among Monotremata, Marsupialia, and Eutheria.</title>
        <authorList>
            <person name="Janke A."/>
            <person name="Xu X."/>
            <person name="Arnason U."/>
        </authorList>
    </citation>
    <scope>NUCLEOTIDE SEQUENCE [GENOMIC DNA]</scope>
</reference>
<protein>
    <recommendedName>
        <fullName>Cytochrome c oxidase subunit 1</fullName>
        <ecNumber>7.1.1.9</ecNumber>
    </recommendedName>
    <alternativeName>
        <fullName>Cytochrome c oxidase polypeptide I</fullName>
    </alternativeName>
</protein>
<keyword id="KW-0106">Calcium</keyword>
<keyword id="KW-0186">Copper</keyword>
<keyword id="KW-0249">Electron transport</keyword>
<keyword id="KW-0349">Heme</keyword>
<keyword id="KW-0408">Iron</keyword>
<keyword id="KW-0460">Magnesium</keyword>
<keyword id="KW-0472">Membrane</keyword>
<keyword id="KW-0479">Metal-binding</keyword>
<keyword id="KW-0496">Mitochondrion</keyword>
<keyword id="KW-0999">Mitochondrion inner membrane</keyword>
<keyword id="KW-0679">Respiratory chain</keyword>
<keyword id="KW-0915">Sodium</keyword>
<keyword id="KW-1278">Translocase</keyword>
<keyword id="KW-0812">Transmembrane</keyword>
<keyword id="KW-1133">Transmembrane helix</keyword>
<keyword id="KW-0813">Transport</keyword>
<proteinExistence type="inferred from homology"/>
<name>COX1_OSPRO</name>
<organism>
    <name type="scientific">Osphranter robustus</name>
    <name type="common">Wallaroo</name>
    <name type="synonym">Macropus robustus</name>
    <dbReference type="NCBI Taxonomy" id="9319"/>
    <lineage>
        <taxon>Eukaryota</taxon>
        <taxon>Metazoa</taxon>
        <taxon>Chordata</taxon>
        <taxon>Craniata</taxon>
        <taxon>Vertebrata</taxon>
        <taxon>Euteleostomi</taxon>
        <taxon>Mammalia</taxon>
        <taxon>Metatheria</taxon>
        <taxon>Diprotodontia</taxon>
        <taxon>Macropodidae</taxon>
        <taxon>Osphranter</taxon>
    </lineage>
</organism>
<comment type="function">
    <text evidence="3">Component of the cytochrome c oxidase, the last enzyme in the mitochondrial electron transport chain which drives oxidative phosphorylation. The respiratory chain contains 3 multisubunit complexes succinate dehydrogenase (complex II, CII), ubiquinol-cytochrome c oxidoreductase (cytochrome b-c1 complex, complex III, CIII) and cytochrome c oxidase (complex IV, CIV), that cooperate to transfer electrons derived from NADH and succinate to molecular oxygen, creating an electrochemical gradient over the inner membrane that drives transmembrane transport and the ATP synthase. Cytochrome c oxidase is the component of the respiratory chain that catalyzes the reduction of oxygen to water. Electrons originating from reduced cytochrome c in the intermembrane space (IMS) are transferred via the dinuclear copper A center (CU(A)) of subunit 2 and heme A of subunit 1 to the active site in subunit 1, a binuclear center (BNC) formed by heme A3 and copper B (CU(B)). The BNC reduces molecular oxygen to 2 water molecules using 4 electrons from cytochrome c in the IMS and 4 protons from the mitochondrial matrix.</text>
</comment>
<comment type="catalytic activity">
    <reaction evidence="3">
        <text>4 Fe(II)-[cytochrome c] + O2 + 8 H(+)(in) = 4 Fe(III)-[cytochrome c] + 2 H2O + 4 H(+)(out)</text>
        <dbReference type="Rhea" id="RHEA:11436"/>
        <dbReference type="Rhea" id="RHEA-COMP:10350"/>
        <dbReference type="Rhea" id="RHEA-COMP:14399"/>
        <dbReference type="ChEBI" id="CHEBI:15377"/>
        <dbReference type="ChEBI" id="CHEBI:15378"/>
        <dbReference type="ChEBI" id="CHEBI:15379"/>
        <dbReference type="ChEBI" id="CHEBI:29033"/>
        <dbReference type="ChEBI" id="CHEBI:29034"/>
        <dbReference type="EC" id="7.1.1.9"/>
    </reaction>
    <physiologicalReaction direction="left-to-right" evidence="3">
        <dbReference type="Rhea" id="RHEA:11437"/>
    </physiologicalReaction>
</comment>
<comment type="cofactor">
    <cofactor evidence="2">
        <name>heme</name>
        <dbReference type="ChEBI" id="CHEBI:30413"/>
    </cofactor>
    <text evidence="2">Binds 2 heme A groups non-covalently per subunit.</text>
</comment>
<comment type="cofactor">
    <cofactor evidence="2">
        <name>Cu cation</name>
        <dbReference type="ChEBI" id="CHEBI:23378"/>
    </cofactor>
    <text evidence="2">Binds a copper B center.</text>
</comment>
<comment type="pathway">
    <text evidence="3">Energy metabolism; oxidative phosphorylation.</text>
</comment>
<comment type="subunit">
    <text evidence="1 2">Component of the cytochrome c oxidase (complex IV, CIV), a multisubunit enzyme composed of 14 subunits. The complex is composed of a catalytic core of 3 subunits MT-CO1, MT-CO2 and MT-CO3, encoded in the mitochondrial DNA, and 11 supernumerary subunits COX4I, COX5A, COX5B, COX6A, COX6B, COX6C, COX7A, COX7B, COX7C, COX8 and NDUFA4, which are encoded in the nuclear genome. The complex exists as a monomer or a dimer and forms supercomplexes (SCs) in the inner mitochondrial membrane with NADH-ubiquinone oxidoreductase (complex I, CI) and ubiquinol-cytochrome c oxidoreductase (cytochrome b-c1 complex, complex III, CIII), resulting in different assemblies (supercomplex SCI(1)III(2)IV(1) and megacomplex MCI(2)III(2)IV(2)) (By similarity). As a newly synthesized protein, rapidly incorporates into a multi-subunit assembly intermediate in the inner membrane, called MITRAC (mitochondrial translation regulation assembly intermediate of cytochrome c oxidase) complex, whose core components are COA3/MITRAC12 and COX14. Within the MITRAC complex, interacts with COA3 and with SMIM20/MITRAC7; the interaction with SMIM20 stabilizes the newly synthesized MT-CO1 and prevents its premature turnover. Interacts with TMEM177 in a COX20-dependent manner (By similarity).</text>
</comment>
<comment type="subcellular location">
    <subcellularLocation>
        <location evidence="2">Mitochondrion inner membrane</location>
        <topology evidence="2">Multi-pass membrane protein</topology>
    </subcellularLocation>
</comment>
<comment type="similarity">
    <text evidence="4">Belongs to the heme-copper respiratory oxidase family.</text>
</comment>
<dbReference type="EC" id="7.1.1.9"/>
<dbReference type="EMBL" id="Y10524">
    <property type="protein sequence ID" value="CAA71538.1"/>
    <property type="molecule type" value="Genomic_DNA"/>
</dbReference>
<dbReference type="PIR" id="T11430">
    <property type="entry name" value="T11430"/>
</dbReference>
<dbReference type="RefSeq" id="NP_007396.1">
    <property type="nucleotide sequence ID" value="NC_001794.1"/>
</dbReference>
<dbReference type="SMR" id="P92661"/>
<dbReference type="GeneID" id="808068"/>
<dbReference type="CTD" id="4512"/>
<dbReference type="UniPathway" id="UPA00705"/>
<dbReference type="GO" id="GO:0005743">
    <property type="term" value="C:mitochondrial inner membrane"/>
    <property type="evidence" value="ECO:0007669"/>
    <property type="project" value="UniProtKB-SubCell"/>
</dbReference>
<dbReference type="GO" id="GO:0045277">
    <property type="term" value="C:respiratory chain complex IV"/>
    <property type="evidence" value="ECO:0000250"/>
    <property type="project" value="UniProtKB"/>
</dbReference>
<dbReference type="GO" id="GO:0004129">
    <property type="term" value="F:cytochrome-c oxidase activity"/>
    <property type="evidence" value="ECO:0007669"/>
    <property type="project" value="UniProtKB-EC"/>
</dbReference>
<dbReference type="GO" id="GO:0020037">
    <property type="term" value="F:heme binding"/>
    <property type="evidence" value="ECO:0007669"/>
    <property type="project" value="InterPro"/>
</dbReference>
<dbReference type="GO" id="GO:0046872">
    <property type="term" value="F:metal ion binding"/>
    <property type="evidence" value="ECO:0007669"/>
    <property type="project" value="UniProtKB-KW"/>
</dbReference>
<dbReference type="GO" id="GO:0015990">
    <property type="term" value="P:electron transport coupled proton transport"/>
    <property type="evidence" value="ECO:0007669"/>
    <property type="project" value="TreeGrafter"/>
</dbReference>
<dbReference type="GO" id="GO:0006123">
    <property type="term" value="P:mitochondrial electron transport, cytochrome c to oxygen"/>
    <property type="evidence" value="ECO:0007669"/>
    <property type="project" value="TreeGrafter"/>
</dbReference>
<dbReference type="CDD" id="cd01663">
    <property type="entry name" value="Cyt_c_Oxidase_I"/>
    <property type="match status" value="1"/>
</dbReference>
<dbReference type="FunFam" id="1.20.210.10:FF:000001">
    <property type="entry name" value="Cytochrome c oxidase subunit 1"/>
    <property type="match status" value="1"/>
</dbReference>
<dbReference type="Gene3D" id="1.20.210.10">
    <property type="entry name" value="Cytochrome c oxidase-like, subunit I domain"/>
    <property type="match status" value="1"/>
</dbReference>
<dbReference type="InterPro" id="IPR023616">
    <property type="entry name" value="Cyt_c_oxase-like_su1_dom"/>
</dbReference>
<dbReference type="InterPro" id="IPR036927">
    <property type="entry name" value="Cyt_c_oxase-like_su1_sf"/>
</dbReference>
<dbReference type="InterPro" id="IPR000883">
    <property type="entry name" value="Cyt_C_Oxase_1"/>
</dbReference>
<dbReference type="InterPro" id="IPR023615">
    <property type="entry name" value="Cyt_c_Oxase_su1_BS"/>
</dbReference>
<dbReference type="InterPro" id="IPR033944">
    <property type="entry name" value="Cyt_c_oxase_su1_dom"/>
</dbReference>
<dbReference type="PANTHER" id="PTHR10422">
    <property type="entry name" value="CYTOCHROME C OXIDASE SUBUNIT 1"/>
    <property type="match status" value="1"/>
</dbReference>
<dbReference type="PANTHER" id="PTHR10422:SF18">
    <property type="entry name" value="CYTOCHROME C OXIDASE SUBUNIT 1"/>
    <property type="match status" value="1"/>
</dbReference>
<dbReference type="Pfam" id="PF00115">
    <property type="entry name" value="COX1"/>
    <property type="match status" value="1"/>
</dbReference>
<dbReference type="PRINTS" id="PR01165">
    <property type="entry name" value="CYCOXIDASEI"/>
</dbReference>
<dbReference type="SUPFAM" id="SSF81442">
    <property type="entry name" value="Cytochrome c oxidase subunit I-like"/>
    <property type="match status" value="1"/>
</dbReference>
<dbReference type="PROSITE" id="PS50855">
    <property type="entry name" value="COX1"/>
    <property type="match status" value="1"/>
</dbReference>
<dbReference type="PROSITE" id="PS00077">
    <property type="entry name" value="COX1_CUB"/>
    <property type="match status" value="1"/>
</dbReference>
<geneLocation type="mitochondrion"/>